<evidence type="ECO:0000255" key="1">
    <source>
        <dbReference type="HAMAP-Rule" id="MF_00337"/>
    </source>
</evidence>
<accession>B6HZM5</accession>
<keyword id="KW-0963">Cytoplasm</keyword>
<keyword id="KW-0269">Exonuclease</keyword>
<keyword id="KW-0378">Hydrolase</keyword>
<keyword id="KW-0540">Nuclease</keyword>
<organism>
    <name type="scientific">Escherichia coli (strain SE11)</name>
    <dbReference type="NCBI Taxonomy" id="409438"/>
    <lineage>
        <taxon>Bacteria</taxon>
        <taxon>Pseudomonadati</taxon>
        <taxon>Pseudomonadota</taxon>
        <taxon>Gammaproteobacteria</taxon>
        <taxon>Enterobacterales</taxon>
        <taxon>Enterobacteriaceae</taxon>
        <taxon>Escherichia</taxon>
    </lineage>
</organism>
<comment type="function">
    <text evidence="1">Bidirectionally degrades single-stranded DNA into large acid-insoluble oligonucleotides, which are then degraded further into small acid-soluble oligonucleotides.</text>
</comment>
<comment type="catalytic activity">
    <reaction evidence="1">
        <text>Exonucleolytic cleavage in either 5'- to 3'- or 3'- to 5'-direction to yield nucleoside 5'-phosphates.</text>
        <dbReference type="EC" id="3.1.11.6"/>
    </reaction>
</comment>
<comment type="subunit">
    <text evidence="1">Heterooligomer composed of large and small subunits.</text>
</comment>
<comment type="subcellular location">
    <subcellularLocation>
        <location evidence="1">Cytoplasm</location>
    </subcellularLocation>
</comment>
<comment type="similarity">
    <text evidence="1">Belongs to the XseB family.</text>
</comment>
<dbReference type="EC" id="3.1.11.6" evidence="1"/>
<dbReference type="EMBL" id="AP009240">
    <property type="protein sequence ID" value="BAG75968.1"/>
    <property type="molecule type" value="Genomic_DNA"/>
</dbReference>
<dbReference type="RefSeq" id="WP_001124941.1">
    <property type="nucleotide sequence ID" value="NC_011415.1"/>
</dbReference>
<dbReference type="SMR" id="B6HZM5"/>
<dbReference type="KEGG" id="ecy:ECSE_0444"/>
<dbReference type="HOGENOM" id="CLU_145918_3_3_6"/>
<dbReference type="Proteomes" id="UP000008199">
    <property type="component" value="Chromosome"/>
</dbReference>
<dbReference type="GO" id="GO:0005829">
    <property type="term" value="C:cytosol"/>
    <property type="evidence" value="ECO:0007669"/>
    <property type="project" value="TreeGrafter"/>
</dbReference>
<dbReference type="GO" id="GO:0009318">
    <property type="term" value="C:exodeoxyribonuclease VII complex"/>
    <property type="evidence" value="ECO:0007669"/>
    <property type="project" value="InterPro"/>
</dbReference>
<dbReference type="GO" id="GO:0008855">
    <property type="term" value="F:exodeoxyribonuclease VII activity"/>
    <property type="evidence" value="ECO:0007669"/>
    <property type="project" value="UniProtKB-UniRule"/>
</dbReference>
<dbReference type="GO" id="GO:0006308">
    <property type="term" value="P:DNA catabolic process"/>
    <property type="evidence" value="ECO:0007669"/>
    <property type="project" value="UniProtKB-UniRule"/>
</dbReference>
<dbReference type="FunFam" id="1.10.287.1040:FF:000001">
    <property type="entry name" value="Exodeoxyribonuclease 7 small subunit"/>
    <property type="match status" value="1"/>
</dbReference>
<dbReference type="Gene3D" id="1.10.287.1040">
    <property type="entry name" value="Exonuclease VII, small subunit"/>
    <property type="match status" value="1"/>
</dbReference>
<dbReference type="HAMAP" id="MF_00337">
    <property type="entry name" value="Exonuc_7_S"/>
    <property type="match status" value="1"/>
</dbReference>
<dbReference type="InterPro" id="IPR003761">
    <property type="entry name" value="Exonuc_VII_S"/>
</dbReference>
<dbReference type="InterPro" id="IPR037004">
    <property type="entry name" value="Exonuc_VII_ssu_sf"/>
</dbReference>
<dbReference type="NCBIfam" id="NF002137">
    <property type="entry name" value="PRK00977.1-1"/>
    <property type="match status" value="1"/>
</dbReference>
<dbReference type="NCBIfam" id="NF002140">
    <property type="entry name" value="PRK00977.1-4"/>
    <property type="match status" value="1"/>
</dbReference>
<dbReference type="NCBIfam" id="TIGR01280">
    <property type="entry name" value="xseB"/>
    <property type="match status" value="1"/>
</dbReference>
<dbReference type="PANTHER" id="PTHR34137">
    <property type="entry name" value="EXODEOXYRIBONUCLEASE 7 SMALL SUBUNIT"/>
    <property type="match status" value="1"/>
</dbReference>
<dbReference type="PANTHER" id="PTHR34137:SF1">
    <property type="entry name" value="EXODEOXYRIBONUCLEASE 7 SMALL SUBUNIT"/>
    <property type="match status" value="1"/>
</dbReference>
<dbReference type="Pfam" id="PF02609">
    <property type="entry name" value="Exonuc_VII_S"/>
    <property type="match status" value="1"/>
</dbReference>
<dbReference type="PIRSF" id="PIRSF006488">
    <property type="entry name" value="Exonuc_VII_S"/>
    <property type="match status" value="1"/>
</dbReference>
<dbReference type="SUPFAM" id="SSF116842">
    <property type="entry name" value="XseB-like"/>
    <property type="match status" value="1"/>
</dbReference>
<proteinExistence type="inferred from homology"/>
<feature type="chain" id="PRO_1000119925" description="Exodeoxyribonuclease 7 small subunit">
    <location>
        <begin position="1"/>
        <end position="80"/>
    </location>
</feature>
<sequence length="80" mass="8996">MPKKNEAPASFEKALSELEQIVTRLESGDLPLEEALNEFERGVQLARQGQDKLQQAEQRVQILLSDNEDASLTPFTPDNE</sequence>
<reference key="1">
    <citation type="journal article" date="2008" name="DNA Res.">
        <title>Complete genome sequence and comparative analysis of the wild-type commensal Escherichia coli strain SE11 isolated from a healthy adult.</title>
        <authorList>
            <person name="Oshima K."/>
            <person name="Toh H."/>
            <person name="Ogura Y."/>
            <person name="Sasamoto H."/>
            <person name="Morita H."/>
            <person name="Park S.-H."/>
            <person name="Ooka T."/>
            <person name="Iyoda S."/>
            <person name="Taylor T.D."/>
            <person name="Hayashi T."/>
            <person name="Itoh K."/>
            <person name="Hattori M."/>
        </authorList>
    </citation>
    <scope>NUCLEOTIDE SEQUENCE [LARGE SCALE GENOMIC DNA]</scope>
    <source>
        <strain>SE11</strain>
    </source>
</reference>
<name>EX7S_ECOSE</name>
<protein>
    <recommendedName>
        <fullName evidence="1">Exodeoxyribonuclease 7 small subunit</fullName>
        <ecNumber evidence="1">3.1.11.6</ecNumber>
    </recommendedName>
    <alternativeName>
        <fullName evidence="1">Exodeoxyribonuclease VII small subunit</fullName>
        <shortName evidence="1">Exonuclease VII small subunit</shortName>
    </alternativeName>
</protein>
<gene>
    <name evidence="1" type="primary">xseB</name>
    <name type="ordered locus">ECSE_0444</name>
</gene>